<organism>
    <name type="scientific">Arabidopsis thaliana</name>
    <name type="common">Mouse-ear cress</name>
    <dbReference type="NCBI Taxonomy" id="3702"/>
    <lineage>
        <taxon>Eukaryota</taxon>
        <taxon>Viridiplantae</taxon>
        <taxon>Streptophyta</taxon>
        <taxon>Embryophyta</taxon>
        <taxon>Tracheophyta</taxon>
        <taxon>Spermatophyta</taxon>
        <taxon>Magnoliopsida</taxon>
        <taxon>eudicotyledons</taxon>
        <taxon>Gunneridae</taxon>
        <taxon>Pentapetalae</taxon>
        <taxon>rosids</taxon>
        <taxon>malvids</taxon>
        <taxon>Brassicales</taxon>
        <taxon>Brassicaceae</taxon>
        <taxon>Camelineae</taxon>
        <taxon>Arabidopsis</taxon>
    </lineage>
</organism>
<gene>
    <name type="primary">3AT1</name>
    <name type="ordered locus">At1g03940</name>
    <name type="ORF">F21M11.13</name>
</gene>
<protein>
    <recommendedName>
        <fullName>Coumaroyl-CoA:anthocyanidin 3-O-glucoside-6''-O-coumaroyltransferase 1</fullName>
        <ecNumber>2.3.1.-</ecNumber>
    </recommendedName>
</protein>
<feature type="chain" id="PRO_0000419540" description="Coumaroyl-CoA:anthocyanidin 3-O-glucoside-6''-O-coumaroyltransferase 1">
    <location>
        <begin position="1"/>
        <end position="469"/>
    </location>
</feature>
<feature type="active site" description="Proton acceptor" evidence="1">
    <location>
        <position position="173"/>
    </location>
</feature>
<feature type="active site" description="Proton acceptor" evidence="1">
    <location>
        <position position="410"/>
    </location>
</feature>
<feature type="modified residue" description="N-acetylmethionine" evidence="2">
    <location>
        <position position="1"/>
    </location>
</feature>
<reference key="1">
    <citation type="journal article" date="2000" name="Nature">
        <title>Sequence and analysis of chromosome 1 of the plant Arabidopsis thaliana.</title>
        <authorList>
            <person name="Theologis A."/>
            <person name="Ecker J.R."/>
            <person name="Palm C.J."/>
            <person name="Federspiel N.A."/>
            <person name="Kaul S."/>
            <person name="White O."/>
            <person name="Alonso J."/>
            <person name="Altafi H."/>
            <person name="Araujo R."/>
            <person name="Bowman C.L."/>
            <person name="Brooks S.Y."/>
            <person name="Buehler E."/>
            <person name="Chan A."/>
            <person name="Chao Q."/>
            <person name="Chen H."/>
            <person name="Cheuk R.F."/>
            <person name="Chin C.W."/>
            <person name="Chung M.K."/>
            <person name="Conn L."/>
            <person name="Conway A.B."/>
            <person name="Conway A.R."/>
            <person name="Creasy T.H."/>
            <person name="Dewar K."/>
            <person name="Dunn P."/>
            <person name="Etgu P."/>
            <person name="Feldblyum T.V."/>
            <person name="Feng J.-D."/>
            <person name="Fong B."/>
            <person name="Fujii C.Y."/>
            <person name="Gill J.E."/>
            <person name="Goldsmith A.D."/>
            <person name="Haas B."/>
            <person name="Hansen N.F."/>
            <person name="Hughes B."/>
            <person name="Huizar L."/>
            <person name="Hunter J.L."/>
            <person name="Jenkins J."/>
            <person name="Johnson-Hopson C."/>
            <person name="Khan S."/>
            <person name="Khaykin E."/>
            <person name="Kim C.J."/>
            <person name="Koo H.L."/>
            <person name="Kremenetskaia I."/>
            <person name="Kurtz D.B."/>
            <person name="Kwan A."/>
            <person name="Lam B."/>
            <person name="Langin-Hooper S."/>
            <person name="Lee A."/>
            <person name="Lee J.M."/>
            <person name="Lenz C.A."/>
            <person name="Li J.H."/>
            <person name="Li Y.-P."/>
            <person name="Lin X."/>
            <person name="Liu S.X."/>
            <person name="Liu Z.A."/>
            <person name="Luros J.S."/>
            <person name="Maiti R."/>
            <person name="Marziali A."/>
            <person name="Militscher J."/>
            <person name="Miranda M."/>
            <person name="Nguyen M."/>
            <person name="Nierman W.C."/>
            <person name="Osborne B.I."/>
            <person name="Pai G."/>
            <person name="Peterson J."/>
            <person name="Pham P.K."/>
            <person name="Rizzo M."/>
            <person name="Rooney T."/>
            <person name="Rowley D."/>
            <person name="Sakano H."/>
            <person name="Salzberg S.L."/>
            <person name="Schwartz J.R."/>
            <person name="Shinn P."/>
            <person name="Southwick A.M."/>
            <person name="Sun H."/>
            <person name="Tallon L.J."/>
            <person name="Tambunga G."/>
            <person name="Toriumi M.J."/>
            <person name="Town C.D."/>
            <person name="Utterback T."/>
            <person name="Van Aken S."/>
            <person name="Vaysberg M."/>
            <person name="Vysotskaia V.S."/>
            <person name="Walker M."/>
            <person name="Wu D."/>
            <person name="Yu G."/>
            <person name="Fraser C.M."/>
            <person name="Venter J.C."/>
            <person name="Davis R.W."/>
        </authorList>
    </citation>
    <scope>NUCLEOTIDE SEQUENCE [LARGE SCALE GENOMIC DNA]</scope>
    <source>
        <strain>cv. Columbia</strain>
    </source>
</reference>
<reference key="2">
    <citation type="journal article" date="2017" name="Plant J.">
        <title>Araport11: a complete reannotation of the Arabidopsis thaliana reference genome.</title>
        <authorList>
            <person name="Cheng C.Y."/>
            <person name="Krishnakumar V."/>
            <person name="Chan A.P."/>
            <person name="Thibaud-Nissen F."/>
            <person name="Schobel S."/>
            <person name="Town C.D."/>
        </authorList>
    </citation>
    <scope>GENOME REANNOTATION</scope>
    <source>
        <strain>cv. Columbia</strain>
    </source>
</reference>
<reference key="3">
    <citation type="journal article" date="2007" name="Plant J.">
        <title>Convergent evolution in the BAHD family of acyl transferases: identification and characterization of anthocyanin acyl transferases from Arabidopsis thaliana.</title>
        <authorList>
            <person name="Luo J."/>
            <person name="Nishiyama Y."/>
            <person name="Fuell C."/>
            <person name="Taguchi G."/>
            <person name="Elliott K."/>
            <person name="Hill L."/>
            <person name="Tanaka Y."/>
            <person name="Kitayama M."/>
            <person name="Yamazaki M."/>
            <person name="Bailey P."/>
            <person name="Parr A."/>
            <person name="Michael A.J."/>
            <person name="Saito K."/>
            <person name="Martin C."/>
        </authorList>
    </citation>
    <scope>FUNCTION</scope>
    <scope>CATALYTIC ACTIVITY</scope>
    <scope>BIOPHYSICOCHEMICAL PROPERTIES</scope>
    <scope>INDUCTION</scope>
    <scope>TISSUE SPECIFICITY</scope>
    <scope>DISRUPTION PHENOTYPE</scope>
    <source>
        <strain>cv. Columbia</strain>
    </source>
</reference>
<reference key="4">
    <citation type="journal article" date="2013" name="Plant Physiol. Biochem.">
        <title>The flavonoid biosynthetic pathway in Arabidopsis: Structural and genetic diversity.</title>
        <authorList>
            <person name="Saito K."/>
            <person name="Yonekura-Sakakibara K."/>
            <person name="Nakabayashi R."/>
            <person name="Higashi Y."/>
            <person name="Yamazaki M."/>
            <person name="Tohge T."/>
            <person name="Fernie A.R."/>
        </authorList>
    </citation>
    <scope>REVIEW</scope>
    <scope>NOMENCLATURE</scope>
</reference>
<dbReference type="EC" id="2.3.1.-"/>
<dbReference type="EMBL" id="AC003027">
    <property type="protein sequence ID" value="AAD10676.1"/>
    <property type="molecule type" value="Genomic_DNA"/>
</dbReference>
<dbReference type="EMBL" id="CP002684">
    <property type="protein sequence ID" value="AEE27636.1"/>
    <property type="molecule type" value="Genomic_DNA"/>
</dbReference>
<dbReference type="PIR" id="C86170">
    <property type="entry name" value="C86170"/>
</dbReference>
<dbReference type="RefSeq" id="NP_171890.1">
    <property type="nucleotide sequence ID" value="NM_100275.3"/>
</dbReference>
<dbReference type="SMR" id="Q9ZWB4"/>
<dbReference type="FunCoup" id="Q9ZWB4">
    <property type="interactions" value="13"/>
</dbReference>
<dbReference type="STRING" id="3702.Q9ZWB4"/>
<dbReference type="PaxDb" id="3702-AT1G03940.1"/>
<dbReference type="ProteomicsDB" id="245166"/>
<dbReference type="EnsemblPlants" id="AT1G03940.1">
    <property type="protein sequence ID" value="AT1G03940.1"/>
    <property type="gene ID" value="AT1G03940"/>
</dbReference>
<dbReference type="GeneID" id="839366"/>
<dbReference type="Gramene" id="AT1G03940.1">
    <property type="protein sequence ID" value="AT1G03940.1"/>
    <property type="gene ID" value="AT1G03940"/>
</dbReference>
<dbReference type="KEGG" id="ath:AT1G03940"/>
<dbReference type="Araport" id="AT1G03940"/>
<dbReference type="TAIR" id="AT1G03940"/>
<dbReference type="eggNOG" id="ENOG502QPXT">
    <property type="taxonomic scope" value="Eukaryota"/>
</dbReference>
<dbReference type="HOGENOM" id="CLU_014546_7_2_1"/>
<dbReference type="InParanoid" id="Q9ZWB4"/>
<dbReference type="OMA" id="MPIMAVK"/>
<dbReference type="PhylomeDB" id="Q9ZWB4"/>
<dbReference type="BioCyc" id="ARA:AT1G03940-MONOMER"/>
<dbReference type="BioCyc" id="MetaCyc:MONOMER-18503"/>
<dbReference type="PRO" id="PR:Q9ZWB4"/>
<dbReference type="Proteomes" id="UP000006548">
    <property type="component" value="Chromosome 1"/>
</dbReference>
<dbReference type="ExpressionAtlas" id="Q9ZWB4">
    <property type="expression patterns" value="baseline and differential"/>
</dbReference>
<dbReference type="GO" id="GO:0016747">
    <property type="term" value="F:acyltransferase activity, transferring groups other than amino-acyl groups"/>
    <property type="evidence" value="ECO:0007669"/>
    <property type="project" value="UniProtKB-ARBA"/>
</dbReference>
<dbReference type="Gene3D" id="3.30.559.10">
    <property type="entry name" value="Chloramphenicol acetyltransferase-like domain"/>
    <property type="match status" value="2"/>
</dbReference>
<dbReference type="InterPro" id="IPR023213">
    <property type="entry name" value="CAT-like_dom_sf"/>
</dbReference>
<dbReference type="InterPro" id="IPR051504">
    <property type="entry name" value="Plant_metabolite_acyltrans"/>
</dbReference>
<dbReference type="PANTHER" id="PTHR31625">
    <property type="match status" value="1"/>
</dbReference>
<dbReference type="Pfam" id="PF02458">
    <property type="entry name" value="Transferase"/>
    <property type="match status" value="1"/>
</dbReference>
<proteinExistence type="evidence at protein level"/>
<accession>Q9ZWB4</accession>
<comment type="function">
    <text evidence="3">Involved in the acylation of the 6'' position of the 3-O-glucose residue of anthocyanin. Also able to use flavonol 3-glucosides as the acyl acceptor.</text>
</comment>
<comment type="biophysicochemical properties">
    <kinetics>
        <KM evidence="3">3.9 uM for p-coumaroyl-CoA (with cyanidin 3,5-diglucoside as cosubstrate)</KM>
        <KM evidence="3">4.2 uM for feruloyl-CoA (with cyanidin 3,5-diglucoside as cosubstrate)</KM>
        <KM evidence="3">2.2 uM for caffeoyl-CoA (with cyanidin 3,5-diglucoside as cosubstrate)</KM>
        <KM evidence="3">7 uM for cyanidin 3-glucoside (with malonyl-CoA as cosubstrate)</KM>
        <KM evidence="3">7.3 uM for pelargonidin 3-glucoside (with malonyl-CoA as cosubstrate)</KM>
        <KM evidence="3">6.9 uM for malvidin 3-glucoside (with malonyl-CoA as cosubstrate)</KM>
        <KM evidence="3">45.7 uM for quercetin 3-glucoside (with malonyl-CoA as cosubstrate)</KM>
        <KM evidence="3">64.8 uM for kaempferol 3-glucoside (with malonyl-CoA as cosubstrate)</KM>
        <KM evidence="3">9.4 uM for kaempferol 7-glucoside (with malonyl-CoA as cosubstrate)</KM>
        <KM evidence="3">141 uM for cyanidin 3,5-diglucoside (with malonyl-CoA as cosubstrate)</KM>
        <KM evidence="3">116 uM for pelargonidin 3,5-diglucoside (with malonyl-CoA as cosubstrate)</KM>
        <text>kcat is 7.6 sec(-1) for p-coumaroyl-CoA. kcat is 8.5 sec(-1) for feruloyl-CoA. kcat is 9.3 sec(-1) for caffeoyl-CoA. kcat is 7.6 sec(-1) for cyanidin 3-glucoside. kcat is 8.0 sec(-1) for pelargonidin 3-glucoside. kcat is 7.8 sec(-1) for malvidin 3-glucoside. kcat is 1.2 sec(-1) for quercetin 3-glucoside. kcat is 1.1 sec(-1) for kaempferol 3-glucoside. kcat is 2.6 sec(-1) for kaempferol 7-glucoside. kcat is &lt;0.001 sec(-1) for cyanidin 3,5-diglucoside. kcat is &lt;0.001 sec(-1) for pelargonidin 3,5-diglucoside.</text>
    </kinetics>
</comment>
<comment type="tissue specificity">
    <text evidence="3">Highly expressed in flowers, leaves and roots. Lower levels of expression in stems and siliques.</text>
</comment>
<comment type="induction">
    <text evidence="3">Up-regulated by high sucrose and by low phosphate stresses.</text>
</comment>
<comment type="disruption phenotype">
    <text evidence="3">No visible phenotype, probably due to the redundancy with 3AT2.</text>
</comment>
<comment type="similarity">
    <text evidence="4">Belongs to the plant acyltransferase family.</text>
</comment>
<sequence length="469" mass="51926">MVAHLQPPKIIETCHISPPKGTVPSTTLPLTFFDAPWLSLPLADSLFFFSYQNSTESFLQDFVPNLKHSLSITLQHFFPYAGKLIIPPRPDPPYLHYNDGQDSLVFTVAESTETDFDQLKSDSPKDISVLHGVLPKLPPPHVSPEGIQMRPIMAMQVTIFPGAGICIGNSATHVVADGVTFSHFMKYWMSLTKSSGKDPATVLLPSLPIHSCRNMIKDPGEVGAGHLERFWSQNSAKHSSHVTPENMVRATFTLSRKQIDNLKSWVTEQSENQSPVSTFVVTLAFIWVSLIKTLVQDSETKANEEDKDEVFHLMINVDCRNRLKYTQPIPQTYFGNCMAPGIVSVKKHDLLGEKCVLAASDAITARIKDMLSSDLLKTAPRWGQGVRKWVMSHYPTSIAGAPKLGLYDMDFGLGKPCKMEIVHIETGGSIAFSESRDGSNGVEIGIALEKKKMDVFDSILQQGIKKFAT</sequence>
<keyword id="KW-0007">Acetylation</keyword>
<keyword id="KW-0012">Acyltransferase</keyword>
<keyword id="KW-1185">Reference proteome</keyword>
<keyword id="KW-0808">Transferase</keyword>
<name>3AT1_ARATH</name>
<evidence type="ECO:0000250" key="1"/>
<evidence type="ECO:0000250" key="2">
    <source>
        <dbReference type="UniProtKB" id="Q940Z5"/>
    </source>
</evidence>
<evidence type="ECO:0000269" key="3">
    <source>
    </source>
</evidence>
<evidence type="ECO:0000305" key="4"/>